<name>RIR2_EHV1B</name>
<organismHost>
    <name type="scientific">Equus caballus</name>
    <name type="common">Horse</name>
    <dbReference type="NCBI Taxonomy" id="9796"/>
</organismHost>
<sequence length="321" mass="36017">MSIENSKEAALTAELSLAGAFFYTPECPDIEHLRSLSVANRWLDTDLPISDDLKDVAKLTPAEREFYRFLFAFLSAADDLVNLNLGDLSALFTQKDILHYYIEQESIEVTHSRVYSAIQLMLFGNDAAARARYVASIIGDAAIGRKVAWLQAKVRECGSVAEKYILMILIEGLFFASSFASIAYLRTHNLFVVTCQSNDLISRDEAIHTRASCCIYNNYLGGFEKPEPKRIYELFSEAVNIECEFLLSHAPQYSHLLDIGAIISYVRYSADRLLGEIGLSPLFNAPKPSPSFPLAFMTVEKHTNFFERRSTAYSGTLINDL</sequence>
<protein>
    <recommendedName>
        <fullName evidence="1">Ribonucleoside-diphosphate reductase small subunit</fullName>
        <ecNumber evidence="1">1.17.4.1</ecNumber>
    </recommendedName>
    <alternativeName>
        <fullName evidence="1">Ribonucleotide reductase small subunit</fullName>
    </alternativeName>
</protein>
<accession>P28847</accession>
<proteinExistence type="inferred from homology"/>
<reference key="1">
    <citation type="journal article" date="1992" name="Virology">
        <title>The DNA sequence of equine herpesvirus-1.</title>
        <authorList>
            <person name="Telford E.A.R."/>
            <person name="Watson M.S."/>
            <person name="McBride K."/>
            <person name="Davison A.J."/>
        </authorList>
    </citation>
    <scope>NUCLEOTIDE SEQUENCE [LARGE SCALE GENOMIC DNA]</scope>
</reference>
<reference key="2">
    <citation type="journal article" date="2009" name="Trends Biochem. Sci.">
        <title>Tinkering with a viral ribonucleotide reductase.</title>
        <authorList>
            <person name="Lembo D."/>
            <person name="Brune W."/>
        </authorList>
    </citation>
    <scope>REVIEW</scope>
</reference>
<evidence type="ECO:0000255" key="1">
    <source>
        <dbReference type="HAMAP-Rule" id="MF_04028"/>
    </source>
</evidence>
<feature type="chain" id="PRO_0000190508" description="Ribonucleoside-diphosphate reductase small subunit">
    <location>
        <begin position="1"/>
        <end position="321"/>
    </location>
</feature>
<feature type="transmembrane region" description="Helical" evidence="1">
    <location>
        <begin position="165"/>
        <end position="185"/>
    </location>
</feature>
<feature type="active site" evidence="1">
    <location>
        <position position="115"/>
    </location>
</feature>
<feature type="binding site" evidence="1">
    <location>
        <position position="78"/>
    </location>
    <ligand>
        <name>Fe cation</name>
        <dbReference type="ChEBI" id="CHEBI:24875"/>
        <label>1</label>
    </ligand>
</feature>
<feature type="binding site" evidence="1">
    <location>
        <position position="108"/>
    </location>
    <ligand>
        <name>Fe cation</name>
        <dbReference type="ChEBI" id="CHEBI:24875"/>
        <label>1</label>
    </ligand>
</feature>
<feature type="binding site" evidence="1">
    <location>
        <position position="108"/>
    </location>
    <ligand>
        <name>Fe cation</name>
        <dbReference type="ChEBI" id="CHEBI:24875"/>
        <label>2</label>
    </ligand>
</feature>
<feature type="binding site" evidence="1">
    <location>
        <position position="111"/>
    </location>
    <ligand>
        <name>Fe cation</name>
        <dbReference type="ChEBI" id="CHEBI:24875"/>
        <label>1</label>
    </ligand>
</feature>
<feature type="binding site" evidence="1">
    <location>
        <position position="171"/>
    </location>
    <ligand>
        <name>Fe cation</name>
        <dbReference type="ChEBI" id="CHEBI:24875"/>
        <label>2</label>
    </ligand>
</feature>
<feature type="binding site" evidence="1">
    <location>
        <position position="205"/>
    </location>
    <ligand>
        <name>Fe cation</name>
        <dbReference type="ChEBI" id="CHEBI:24875"/>
        <label>2</label>
    </ligand>
</feature>
<feature type="binding site" evidence="1">
    <location>
        <position position="208"/>
    </location>
    <ligand>
        <name>Fe cation</name>
        <dbReference type="ChEBI" id="CHEBI:24875"/>
        <label>2</label>
    </ligand>
</feature>
<gene>
    <name evidence="1" type="primary">RIR2</name>
    <name type="synonym">20</name>
</gene>
<dbReference type="EC" id="1.17.4.1" evidence="1"/>
<dbReference type="EMBL" id="AY665713">
    <property type="protein sequence ID" value="AAT67277.1"/>
    <property type="molecule type" value="Genomic_DNA"/>
</dbReference>
<dbReference type="PIR" id="C36797">
    <property type="entry name" value="WMBEA1"/>
</dbReference>
<dbReference type="SMR" id="P28847"/>
<dbReference type="KEGG" id="vg:1487524"/>
<dbReference type="Proteomes" id="UP000001189">
    <property type="component" value="Segment"/>
</dbReference>
<dbReference type="GO" id="GO:0033644">
    <property type="term" value="C:host cell membrane"/>
    <property type="evidence" value="ECO:0007669"/>
    <property type="project" value="UniProtKB-SubCell"/>
</dbReference>
<dbReference type="GO" id="GO:0016020">
    <property type="term" value="C:membrane"/>
    <property type="evidence" value="ECO:0007669"/>
    <property type="project" value="UniProtKB-KW"/>
</dbReference>
<dbReference type="GO" id="GO:0046872">
    <property type="term" value="F:metal ion binding"/>
    <property type="evidence" value="ECO:0007669"/>
    <property type="project" value="UniProtKB-KW"/>
</dbReference>
<dbReference type="GO" id="GO:0004748">
    <property type="term" value="F:ribonucleoside-diphosphate reductase activity, thioredoxin disulfide as acceptor"/>
    <property type="evidence" value="ECO:0007669"/>
    <property type="project" value="UniProtKB-EC"/>
</dbReference>
<dbReference type="GO" id="GO:0009263">
    <property type="term" value="P:deoxyribonucleotide biosynthetic process"/>
    <property type="evidence" value="ECO:0007669"/>
    <property type="project" value="InterPro"/>
</dbReference>
<dbReference type="GO" id="GO:0006260">
    <property type="term" value="P:DNA replication"/>
    <property type="evidence" value="ECO:0007669"/>
    <property type="project" value="UniProtKB-KW"/>
</dbReference>
<dbReference type="GO" id="GO:0019046">
    <property type="term" value="P:release from viral latency"/>
    <property type="evidence" value="ECO:0007669"/>
    <property type="project" value="UniProtKB-KW"/>
</dbReference>
<dbReference type="CDD" id="cd01049">
    <property type="entry name" value="RNRR2"/>
    <property type="match status" value="1"/>
</dbReference>
<dbReference type="Gene3D" id="1.10.620.20">
    <property type="entry name" value="Ribonucleotide Reductase, subunit A"/>
    <property type="match status" value="1"/>
</dbReference>
<dbReference type="HAMAP" id="MF_04028">
    <property type="entry name" value="HSV_RIR2"/>
    <property type="match status" value="1"/>
</dbReference>
<dbReference type="InterPro" id="IPR009078">
    <property type="entry name" value="Ferritin-like_SF"/>
</dbReference>
<dbReference type="InterPro" id="IPR034715">
    <property type="entry name" value="HSV_RIR2"/>
</dbReference>
<dbReference type="InterPro" id="IPR012348">
    <property type="entry name" value="RNR-like"/>
</dbReference>
<dbReference type="InterPro" id="IPR033909">
    <property type="entry name" value="RNR_small"/>
</dbReference>
<dbReference type="InterPro" id="IPR030475">
    <property type="entry name" value="RNR_small_AS"/>
</dbReference>
<dbReference type="InterPro" id="IPR000358">
    <property type="entry name" value="RNR_small_fam"/>
</dbReference>
<dbReference type="PANTHER" id="PTHR23409">
    <property type="entry name" value="RIBONUCLEOSIDE-DIPHOSPHATE REDUCTASE SMALL CHAIN"/>
    <property type="match status" value="1"/>
</dbReference>
<dbReference type="PANTHER" id="PTHR23409:SF18">
    <property type="entry name" value="RIBONUCLEOSIDE-DIPHOSPHATE REDUCTASE SUBUNIT M2"/>
    <property type="match status" value="1"/>
</dbReference>
<dbReference type="Pfam" id="PF00268">
    <property type="entry name" value="Ribonuc_red_sm"/>
    <property type="match status" value="1"/>
</dbReference>
<dbReference type="SUPFAM" id="SSF47240">
    <property type="entry name" value="Ferritin-like"/>
    <property type="match status" value="1"/>
</dbReference>
<dbReference type="PROSITE" id="PS00368">
    <property type="entry name" value="RIBORED_SMALL"/>
    <property type="match status" value="1"/>
</dbReference>
<comment type="function">
    <text evidence="1">Ribonucleoside-diphosphate reductase holoenzyme provides the precursors necessary for viral DNA synthesis. Allows virus growth in non-dividing cells, as well as reactivation from latency in infected hosts. Catalyzes the biosynthesis of deoxyribonucleotides from the corresponding ribonucleotides.</text>
</comment>
<comment type="catalytic activity">
    <reaction evidence="1">
        <text>a 2'-deoxyribonucleoside 5'-diphosphate + [thioredoxin]-disulfide + H2O = a ribonucleoside 5'-diphosphate + [thioredoxin]-dithiol</text>
        <dbReference type="Rhea" id="RHEA:23252"/>
        <dbReference type="Rhea" id="RHEA-COMP:10698"/>
        <dbReference type="Rhea" id="RHEA-COMP:10700"/>
        <dbReference type="ChEBI" id="CHEBI:15377"/>
        <dbReference type="ChEBI" id="CHEBI:29950"/>
        <dbReference type="ChEBI" id="CHEBI:50058"/>
        <dbReference type="ChEBI" id="CHEBI:57930"/>
        <dbReference type="ChEBI" id="CHEBI:73316"/>
        <dbReference type="EC" id="1.17.4.1"/>
    </reaction>
</comment>
<comment type="cofactor">
    <cofactor evidence="1">
        <name>Fe cation</name>
        <dbReference type="ChEBI" id="CHEBI:24875"/>
    </cofactor>
</comment>
<comment type="subunit">
    <text evidence="1">Heterotetramer composed of a homodimer of the large subunit (R1) and a homodimer of the small subunit (R2). Larger multisubunit protein complex are also active, composed of (R1)n(R2)n.</text>
</comment>
<comment type="subcellular location">
    <subcellularLocation>
        <location evidence="1">Host membrane</location>
        <topology evidence="1">Single-pass membrane protein</topology>
    </subcellularLocation>
</comment>
<comment type="similarity">
    <text evidence="1">Belongs to the ribonucleoside diphosphate reductase small chain family.</text>
</comment>
<keyword id="KW-0235">DNA replication</keyword>
<keyword id="KW-1043">Host membrane</keyword>
<keyword id="KW-0408">Iron</keyword>
<keyword id="KW-0472">Membrane</keyword>
<keyword id="KW-0479">Metal-binding</keyword>
<keyword id="KW-0560">Oxidoreductase</keyword>
<keyword id="KW-1185">Reference proteome</keyword>
<keyword id="KW-0812">Transmembrane</keyword>
<keyword id="KW-1133">Transmembrane helix</keyword>
<keyword id="KW-1251">Viral latency</keyword>
<keyword id="KW-1272">Viral reactivation from latency</keyword>
<organism>
    <name type="scientific">Equine herpesvirus 1 (strain Ab4p)</name>
    <name type="common">EHV-1</name>
    <name type="synonym">Equine abortion virus</name>
    <dbReference type="NCBI Taxonomy" id="31520"/>
    <lineage>
        <taxon>Viruses</taxon>
        <taxon>Duplodnaviria</taxon>
        <taxon>Heunggongvirae</taxon>
        <taxon>Peploviricota</taxon>
        <taxon>Herviviricetes</taxon>
        <taxon>Herpesvirales</taxon>
        <taxon>Orthoherpesviridae</taxon>
        <taxon>Alphaherpesvirinae</taxon>
        <taxon>Varicellovirus</taxon>
        <taxon>Varicellovirus equidalpha1</taxon>
        <taxon>Equid alphaherpesvirus 1</taxon>
    </lineage>
</organism>